<sequence length="159" mass="16898">MRIGHGFDVHAFGGEGPIIIGGVRIPYEKGLLAHSDGDVALHALTDALLGAAALGDIGKLFPDTDPAFKGADSRELLREAWRRIQAKGYTLGNVDVTIIAQAPKMLPHIPQMRVFIAEDLGCHMDDVNVKATTTEKLGFTGRGEGIACEAVALLIKATK</sequence>
<comment type="function">
    <text evidence="1">Involved in the biosynthesis of isopentenyl diphosphate (IPP) and dimethylallyl diphosphate (DMAPP), two major building blocks of isoprenoid compounds. Catalyzes the conversion of 4-diphosphocytidyl-2-C-methyl-D-erythritol 2-phosphate (CDP-ME2P) to 2-C-methyl-D-erythritol 2,4-cyclodiphosphate (ME-CPP) with a corresponding release of cytidine 5-monophosphate (CMP).</text>
</comment>
<comment type="catalytic activity">
    <reaction evidence="1">
        <text>4-CDP-2-C-methyl-D-erythritol 2-phosphate = 2-C-methyl-D-erythritol 2,4-cyclic diphosphate + CMP</text>
        <dbReference type="Rhea" id="RHEA:23864"/>
        <dbReference type="ChEBI" id="CHEBI:57919"/>
        <dbReference type="ChEBI" id="CHEBI:58483"/>
        <dbReference type="ChEBI" id="CHEBI:60377"/>
        <dbReference type="EC" id="4.6.1.12"/>
    </reaction>
</comment>
<comment type="cofactor">
    <cofactor evidence="1">
        <name>a divalent metal cation</name>
        <dbReference type="ChEBI" id="CHEBI:60240"/>
    </cofactor>
    <text evidence="1">Binds 1 divalent metal cation per subunit.</text>
</comment>
<comment type="pathway">
    <text evidence="1">Isoprenoid biosynthesis; isopentenyl diphosphate biosynthesis via DXP pathway; isopentenyl diphosphate from 1-deoxy-D-xylulose 5-phosphate: step 4/6.</text>
</comment>
<comment type="subunit">
    <text evidence="1">Homotrimer.</text>
</comment>
<comment type="similarity">
    <text evidence="1">Belongs to the IspF family.</text>
</comment>
<accession>B2TZI5</accession>
<gene>
    <name evidence="1" type="primary">ispF</name>
    <name type="ordered locus">SbBS512_E3128</name>
</gene>
<evidence type="ECO:0000255" key="1">
    <source>
        <dbReference type="HAMAP-Rule" id="MF_00107"/>
    </source>
</evidence>
<keyword id="KW-0414">Isoprene biosynthesis</keyword>
<keyword id="KW-0456">Lyase</keyword>
<keyword id="KW-0479">Metal-binding</keyword>
<keyword id="KW-1185">Reference proteome</keyword>
<feature type="chain" id="PRO_1000094292" description="2-C-methyl-D-erythritol 2,4-cyclodiphosphate synthase">
    <location>
        <begin position="1"/>
        <end position="159"/>
    </location>
</feature>
<feature type="binding site" evidence="1">
    <location>
        <begin position="8"/>
        <end position="10"/>
    </location>
    <ligand>
        <name>4-CDP-2-C-methyl-D-erythritol 2-phosphate</name>
        <dbReference type="ChEBI" id="CHEBI:57919"/>
    </ligand>
</feature>
<feature type="binding site" evidence="1">
    <location>
        <position position="8"/>
    </location>
    <ligand>
        <name>a divalent metal cation</name>
        <dbReference type="ChEBI" id="CHEBI:60240"/>
    </ligand>
</feature>
<feature type="binding site" evidence="1">
    <location>
        <position position="10"/>
    </location>
    <ligand>
        <name>a divalent metal cation</name>
        <dbReference type="ChEBI" id="CHEBI:60240"/>
    </ligand>
</feature>
<feature type="binding site" evidence="1">
    <location>
        <begin position="34"/>
        <end position="35"/>
    </location>
    <ligand>
        <name>4-CDP-2-C-methyl-D-erythritol 2-phosphate</name>
        <dbReference type="ChEBI" id="CHEBI:57919"/>
    </ligand>
</feature>
<feature type="binding site" evidence="1">
    <location>
        <position position="42"/>
    </location>
    <ligand>
        <name>a divalent metal cation</name>
        <dbReference type="ChEBI" id="CHEBI:60240"/>
    </ligand>
</feature>
<feature type="binding site" evidence="1">
    <location>
        <begin position="56"/>
        <end position="58"/>
    </location>
    <ligand>
        <name>4-CDP-2-C-methyl-D-erythritol 2-phosphate</name>
        <dbReference type="ChEBI" id="CHEBI:57919"/>
    </ligand>
</feature>
<feature type="binding site" evidence="1">
    <location>
        <begin position="61"/>
        <end position="65"/>
    </location>
    <ligand>
        <name>4-CDP-2-C-methyl-D-erythritol 2-phosphate</name>
        <dbReference type="ChEBI" id="CHEBI:57919"/>
    </ligand>
</feature>
<feature type="binding site" evidence="1">
    <location>
        <begin position="100"/>
        <end position="106"/>
    </location>
    <ligand>
        <name>4-CDP-2-C-methyl-D-erythritol 2-phosphate</name>
        <dbReference type="ChEBI" id="CHEBI:57919"/>
    </ligand>
</feature>
<feature type="binding site" evidence="1">
    <location>
        <begin position="132"/>
        <end position="135"/>
    </location>
    <ligand>
        <name>4-CDP-2-C-methyl-D-erythritol 2-phosphate</name>
        <dbReference type="ChEBI" id="CHEBI:57919"/>
    </ligand>
</feature>
<feature type="binding site" evidence="1">
    <location>
        <position position="139"/>
    </location>
    <ligand>
        <name>4-CDP-2-C-methyl-D-erythritol 2-phosphate</name>
        <dbReference type="ChEBI" id="CHEBI:57919"/>
    </ligand>
</feature>
<feature type="binding site" evidence="1">
    <location>
        <position position="142"/>
    </location>
    <ligand>
        <name>4-CDP-2-C-methyl-D-erythritol 2-phosphate</name>
        <dbReference type="ChEBI" id="CHEBI:57919"/>
    </ligand>
</feature>
<feature type="site" description="Transition state stabilizer" evidence="1">
    <location>
        <position position="34"/>
    </location>
</feature>
<feature type="site" description="Transition state stabilizer" evidence="1">
    <location>
        <position position="133"/>
    </location>
</feature>
<organism>
    <name type="scientific">Shigella boydii serotype 18 (strain CDC 3083-94 / BS512)</name>
    <dbReference type="NCBI Taxonomy" id="344609"/>
    <lineage>
        <taxon>Bacteria</taxon>
        <taxon>Pseudomonadati</taxon>
        <taxon>Pseudomonadota</taxon>
        <taxon>Gammaproteobacteria</taxon>
        <taxon>Enterobacterales</taxon>
        <taxon>Enterobacteriaceae</taxon>
        <taxon>Shigella</taxon>
    </lineage>
</organism>
<protein>
    <recommendedName>
        <fullName evidence="1">2-C-methyl-D-erythritol 2,4-cyclodiphosphate synthase</fullName>
        <shortName evidence="1">MECDP-synthase</shortName>
        <shortName evidence="1">MECPP-synthase</shortName>
        <shortName evidence="1">MECPS</shortName>
        <ecNumber evidence="1">4.6.1.12</ecNumber>
    </recommendedName>
</protein>
<name>ISPF_SHIB3</name>
<reference key="1">
    <citation type="submission" date="2008-05" db="EMBL/GenBank/DDBJ databases">
        <title>Complete sequence of Shigella boydii serotype 18 strain BS512.</title>
        <authorList>
            <person name="Rasko D.A."/>
            <person name="Rosovitz M."/>
            <person name="Maurelli A.T."/>
            <person name="Myers G."/>
            <person name="Seshadri R."/>
            <person name="Cer R."/>
            <person name="Jiang L."/>
            <person name="Ravel J."/>
            <person name="Sebastian Y."/>
        </authorList>
    </citation>
    <scope>NUCLEOTIDE SEQUENCE [LARGE SCALE GENOMIC DNA]</scope>
    <source>
        <strain>CDC 3083-94 / BS512</strain>
    </source>
</reference>
<dbReference type="EC" id="4.6.1.12" evidence="1"/>
<dbReference type="EMBL" id="CP001063">
    <property type="protein sequence ID" value="ACD08879.1"/>
    <property type="molecule type" value="Genomic_DNA"/>
</dbReference>
<dbReference type="RefSeq" id="WP_001219242.1">
    <property type="nucleotide sequence ID" value="NC_010658.1"/>
</dbReference>
<dbReference type="SMR" id="B2TZI5"/>
<dbReference type="STRING" id="344609.SbBS512_E3128"/>
<dbReference type="GeneID" id="93779260"/>
<dbReference type="KEGG" id="sbc:SbBS512_E3128"/>
<dbReference type="HOGENOM" id="CLU_084630_2_0_6"/>
<dbReference type="UniPathway" id="UPA00056">
    <property type="reaction ID" value="UER00095"/>
</dbReference>
<dbReference type="Proteomes" id="UP000001030">
    <property type="component" value="Chromosome"/>
</dbReference>
<dbReference type="GO" id="GO:0008685">
    <property type="term" value="F:2-C-methyl-D-erythritol 2,4-cyclodiphosphate synthase activity"/>
    <property type="evidence" value="ECO:0007669"/>
    <property type="project" value="UniProtKB-UniRule"/>
</dbReference>
<dbReference type="GO" id="GO:0046872">
    <property type="term" value="F:metal ion binding"/>
    <property type="evidence" value="ECO:0007669"/>
    <property type="project" value="UniProtKB-KW"/>
</dbReference>
<dbReference type="GO" id="GO:0019288">
    <property type="term" value="P:isopentenyl diphosphate biosynthetic process, methylerythritol 4-phosphate pathway"/>
    <property type="evidence" value="ECO:0007669"/>
    <property type="project" value="UniProtKB-UniRule"/>
</dbReference>
<dbReference type="GO" id="GO:0016114">
    <property type="term" value="P:terpenoid biosynthetic process"/>
    <property type="evidence" value="ECO:0007669"/>
    <property type="project" value="InterPro"/>
</dbReference>
<dbReference type="CDD" id="cd00554">
    <property type="entry name" value="MECDP_synthase"/>
    <property type="match status" value="1"/>
</dbReference>
<dbReference type="FunFam" id="3.30.1330.50:FF:000001">
    <property type="entry name" value="2-C-methyl-D-erythritol 2,4-cyclodiphosphate synthase"/>
    <property type="match status" value="1"/>
</dbReference>
<dbReference type="Gene3D" id="3.30.1330.50">
    <property type="entry name" value="2-C-methyl-D-erythritol 2,4-cyclodiphosphate synthase"/>
    <property type="match status" value="1"/>
</dbReference>
<dbReference type="HAMAP" id="MF_00107">
    <property type="entry name" value="IspF"/>
    <property type="match status" value="1"/>
</dbReference>
<dbReference type="InterPro" id="IPR003526">
    <property type="entry name" value="MECDP_synthase"/>
</dbReference>
<dbReference type="InterPro" id="IPR020555">
    <property type="entry name" value="MECDP_synthase_CS"/>
</dbReference>
<dbReference type="InterPro" id="IPR036571">
    <property type="entry name" value="MECDP_synthase_sf"/>
</dbReference>
<dbReference type="NCBIfam" id="TIGR00151">
    <property type="entry name" value="ispF"/>
    <property type="match status" value="1"/>
</dbReference>
<dbReference type="PANTHER" id="PTHR43181">
    <property type="entry name" value="2-C-METHYL-D-ERYTHRITOL 2,4-CYCLODIPHOSPHATE SYNTHASE, CHLOROPLASTIC"/>
    <property type="match status" value="1"/>
</dbReference>
<dbReference type="PANTHER" id="PTHR43181:SF1">
    <property type="entry name" value="2-C-METHYL-D-ERYTHRITOL 2,4-CYCLODIPHOSPHATE SYNTHASE, CHLOROPLASTIC"/>
    <property type="match status" value="1"/>
</dbReference>
<dbReference type="Pfam" id="PF02542">
    <property type="entry name" value="YgbB"/>
    <property type="match status" value="1"/>
</dbReference>
<dbReference type="SUPFAM" id="SSF69765">
    <property type="entry name" value="IpsF-like"/>
    <property type="match status" value="1"/>
</dbReference>
<dbReference type="PROSITE" id="PS01350">
    <property type="entry name" value="ISPF"/>
    <property type="match status" value="1"/>
</dbReference>
<proteinExistence type="inferred from homology"/>